<proteinExistence type="evidence at transcript level"/>
<accession>P30693</accession>
<reference key="1">
    <citation type="journal article" date="1992" name="Plant Mol. Biol.">
        <title>Developmental and environmental concurrent expression of sunflower dry-seed-stored low-molecular-weight heat-shock protein and Lea mRNAs.</title>
        <authorList>
            <person name="Almoguera C."/>
            <person name="Jordano J."/>
        </authorList>
    </citation>
    <scope>NUCLEOTIDE SEQUENCE [MRNA]</scope>
    <source>
        <strain>cv. Sunweed</strain>
        <tissue>Seed</tissue>
    </source>
</reference>
<reference key="2">
    <citation type="journal article" date="1997" name="J. Biol. Chem.">
        <title>A plant small heat shock protein gene expressed during zygotic embryogenesis but noninducible by heat stress.</title>
        <authorList>
            <person name="Carranco R."/>
            <person name="Almoguera C."/>
            <person name="Jordano J."/>
        </authorList>
    </citation>
    <scope>NUCLEOTIDE SEQUENCE [GENOMIC DNA]</scope>
</reference>
<protein>
    <recommendedName>
        <fullName>17.6 kDa class I heat shock protein</fullName>
    </recommendedName>
</protein>
<comment type="subunit">
    <text>Forms oligomeric structures.</text>
</comment>
<comment type="subcellular location">
    <subcellularLocation>
        <location>Cytoplasm</location>
    </subcellularLocation>
</comment>
<comment type="similarity">
    <text evidence="1">Belongs to the small heat shock protein (HSP20) family.</text>
</comment>
<keyword id="KW-0963">Cytoplasm</keyword>
<keyword id="KW-0346">Stress response</keyword>
<gene>
    <name type="primary">HSP17.6</name>
</gene>
<evidence type="ECO:0000255" key="1">
    <source>
        <dbReference type="PROSITE-ProRule" id="PRU00285"/>
    </source>
</evidence>
<feature type="chain" id="PRO_0000125976" description="17.6 kDa class I heat shock protein">
    <location>
        <begin position="1"/>
        <end position="153"/>
    </location>
</feature>
<feature type="domain" description="sHSP" evidence="1">
    <location>
        <begin position="38"/>
        <end position="153"/>
    </location>
</feature>
<sequence length="153" mass="17562">MSIIPSFFTSKRSNIFDPFSLDTWDPFQGIISTEPARETAAIVNARIDWKETPEAHVLKADLPGMKKEEVKVEVEDGRVLQISGERCREQEEKDDTWHRVERSSGKFIRRFRLPENAKMDEVKAMMENGVLTVVVPKEEEEKKPMVKAIDISG</sequence>
<dbReference type="EMBL" id="X59701">
    <property type="protein sequence ID" value="CAA42222.1"/>
    <property type="molecule type" value="mRNA"/>
</dbReference>
<dbReference type="EMBL" id="Z95153">
    <property type="protein sequence ID" value="CAB08441.1"/>
    <property type="molecule type" value="Genomic_DNA"/>
</dbReference>
<dbReference type="PIR" id="S23529">
    <property type="entry name" value="S23529"/>
</dbReference>
<dbReference type="SMR" id="P30693"/>
<dbReference type="EnsemblPlants" id="mRNA:HanXRQr2_Chr07g0311641">
    <property type="protein sequence ID" value="CDS:HanXRQr2_Chr07g0311641.1"/>
    <property type="gene ID" value="HanXRQr2_Chr07g0311641"/>
</dbReference>
<dbReference type="Gramene" id="mRNA:HanXRQr2_Chr07g0311641">
    <property type="protein sequence ID" value="CDS:HanXRQr2_Chr07g0311641.1"/>
    <property type="gene ID" value="HanXRQr2_Chr07g0311641"/>
</dbReference>
<dbReference type="OMA" id="PPWMERI"/>
<dbReference type="OrthoDB" id="5511210at2759"/>
<dbReference type="GO" id="GO:0005737">
    <property type="term" value="C:cytoplasm"/>
    <property type="evidence" value="ECO:0007669"/>
    <property type="project" value="UniProtKB-SubCell"/>
</dbReference>
<dbReference type="CDD" id="cd06472">
    <property type="entry name" value="ACD_ScHsp26_like"/>
    <property type="match status" value="1"/>
</dbReference>
<dbReference type="FunFam" id="2.60.40.790:FF:000009">
    <property type="entry name" value="17.6 kDa class I heat shock protein-like"/>
    <property type="match status" value="1"/>
</dbReference>
<dbReference type="Gene3D" id="2.60.40.790">
    <property type="match status" value="1"/>
</dbReference>
<dbReference type="InterPro" id="IPR002068">
    <property type="entry name" value="A-crystallin/Hsp20_dom"/>
</dbReference>
<dbReference type="InterPro" id="IPR008978">
    <property type="entry name" value="HSP20-like_chaperone"/>
</dbReference>
<dbReference type="InterPro" id="IPR031107">
    <property type="entry name" value="Small_HSP"/>
</dbReference>
<dbReference type="PANTHER" id="PTHR11527">
    <property type="entry name" value="HEAT-SHOCK PROTEIN 20 FAMILY MEMBER"/>
    <property type="match status" value="1"/>
</dbReference>
<dbReference type="Pfam" id="PF00011">
    <property type="entry name" value="HSP20"/>
    <property type="match status" value="1"/>
</dbReference>
<dbReference type="SUPFAM" id="SSF49764">
    <property type="entry name" value="HSP20-like chaperones"/>
    <property type="match status" value="1"/>
</dbReference>
<dbReference type="PROSITE" id="PS01031">
    <property type="entry name" value="SHSP"/>
    <property type="match status" value="1"/>
</dbReference>
<organism>
    <name type="scientific">Helianthus annuus</name>
    <name type="common">Common sunflower</name>
    <dbReference type="NCBI Taxonomy" id="4232"/>
    <lineage>
        <taxon>Eukaryota</taxon>
        <taxon>Viridiplantae</taxon>
        <taxon>Streptophyta</taxon>
        <taxon>Embryophyta</taxon>
        <taxon>Tracheophyta</taxon>
        <taxon>Spermatophyta</taxon>
        <taxon>Magnoliopsida</taxon>
        <taxon>eudicotyledons</taxon>
        <taxon>Gunneridae</taxon>
        <taxon>Pentapetalae</taxon>
        <taxon>asterids</taxon>
        <taxon>campanulids</taxon>
        <taxon>Asterales</taxon>
        <taxon>Asteraceae</taxon>
        <taxon>Asteroideae</taxon>
        <taxon>Heliantheae alliance</taxon>
        <taxon>Heliantheae</taxon>
        <taxon>Helianthus</taxon>
    </lineage>
</organism>
<name>HSP11_HELAN</name>